<comment type="function">
    <text evidence="1">Binds to the 23S rRNA.</text>
</comment>
<comment type="similarity">
    <text evidence="1">Belongs to the bacterial ribosomal protein bL9 family.</text>
</comment>
<sequence length="148" mass="16454">MKVIFTQDVKGKGKKGEVKEVPVGYANNFLLKKNYAVEATPGNLKQLELQKKRAKQERQQEIEDAKALKETLSNIEVEVSAKTGEGGKLFGSVSTKQIAEALKAQHDIKIDKRKMDLPNGIHSLGYTNVPVKLDKEVEGTIRVHTVEQ</sequence>
<gene>
    <name evidence="1" type="primary">rplI</name>
    <name type="ordered locus">SACOL0015</name>
</gene>
<evidence type="ECO:0000255" key="1">
    <source>
        <dbReference type="HAMAP-Rule" id="MF_00503"/>
    </source>
</evidence>
<evidence type="ECO:0000305" key="2"/>
<organism>
    <name type="scientific">Staphylococcus aureus (strain COL)</name>
    <dbReference type="NCBI Taxonomy" id="93062"/>
    <lineage>
        <taxon>Bacteria</taxon>
        <taxon>Bacillati</taxon>
        <taxon>Bacillota</taxon>
        <taxon>Bacilli</taxon>
        <taxon>Bacillales</taxon>
        <taxon>Staphylococcaceae</taxon>
        <taxon>Staphylococcus</taxon>
    </lineage>
</organism>
<name>RL9_STAAC</name>
<protein>
    <recommendedName>
        <fullName evidence="1">Large ribosomal subunit protein bL9</fullName>
    </recommendedName>
    <alternativeName>
        <fullName evidence="2">50S ribosomal protein L9</fullName>
    </alternativeName>
</protein>
<proteinExistence type="inferred from homology"/>
<accession>Q5HJY1</accession>
<feature type="chain" id="PRO_0000176675" description="Large ribosomal subunit protein bL9">
    <location>
        <begin position="1"/>
        <end position="148"/>
    </location>
</feature>
<keyword id="KW-0687">Ribonucleoprotein</keyword>
<keyword id="KW-0689">Ribosomal protein</keyword>
<keyword id="KW-0694">RNA-binding</keyword>
<keyword id="KW-0699">rRNA-binding</keyword>
<dbReference type="EMBL" id="CP000046">
    <property type="protein sequence ID" value="AAW37403.1"/>
    <property type="molecule type" value="Genomic_DNA"/>
</dbReference>
<dbReference type="RefSeq" id="WP_000864305.1">
    <property type="nucleotide sequence ID" value="NZ_JBGOFO010000001.1"/>
</dbReference>
<dbReference type="SMR" id="Q5HJY1"/>
<dbReference type="KEGG" id="sac:SACOL0015"/>
<dbReference type="HOGENOM" id="CLU_078938_3_2_9"/>
<dbReference type="Proteomes" id="UP000000530">
    <property type="component" value="Chromosome"/>
</dbReference>
<dbReference type="GO" id="GO:1990904">
    <property type="term" value="C:ribonucleoprotein complex"/>
    <property type="evidence" value="ECO:0007669"/>
    <property type="project" value="UniProtKB-KW"/>
</dbReference>
<dbReference type="GO" id="GO:0005840">
    <property type="term" value="C:ribosome"/>
    <property type="evidence" value="ECO:0007669"/>
    <property type="project" value="UniProtKB-KW"/>
</dbReference>
<dbReference type="GO" id="GO:0019843">
    <property type="term" value="F:rRNA binding"/>
    <property type="evidence" value="ECO:0007669"/>
    <property type="project" value="UniProtKB-UniRule"/>
</dbReference>
<dbReference type="GO" id="GO:0003735">
    <property type="term" value="F:structural constituent of ribosome"/>
    <property type="evidence" value="ECO:0007669"/>
    <property type="project" value="InterPro"/>
</dbReference>
<dbReference type="GO" id="GO:0006412">
    <property type="term" value="P:translation"/>
    <property type="evidence" value="ECO:0007669"/>
    <property type="project" value="UniProtKB-UniRule"/>
</dbReference>
<dbReference type="FunFam" id="3.10.430.100:FF:000002">
    <property type="entry name" value="50S ribosomal protein L9"/>
    <property type="match status" value="1"/>
</dbReference>
<dbReference type="FunFam" id="3.40.5.10:FF:000002">
    <property type="entry name" value="50S ribosomal protein L9"/>
    <property type="match status" value="1"/>
</dbReference>
<dbReference type="Gene3D" id="3.10.430.100">
    <property type="entry name" value="Ribosomal protein L9, C-terminal domain"/>
    <property type="match status" value="1"/>
</dbReference>
<dbReference type="Gene3D" id="3.40.5.10">
    <property type="entry name" value="Ribosomal protein L9, N-terminal domain"/>
    <property type="match status" value="1"/>
</dbReference>
<dbReference type="HAMAP" id="MF_00503">
    <property type="entry name" value="Ribosomal_bL9"/>
    <property type="match status" value="1"/>
</dbReference>
<dbReference type="InterPro" id="IPR000244">
    <property type="entry name" value="Ribosomal_bL9"/>
</dbReference>
<dbReference type="InterPro" id="IPR009027">
    <property type="entry name" value="Ribosomal_bL9/RNase_H1_N"/>
</dbReference>
<dbReference type="InterPro" id="IPR020594">
    <property type="entry name" value="Ribosomal_bL9_bac/chp"/>
</dbReference>
<dbReference type="InterPro" id="IPR020069">
    <property type="entry name" value="Ribosomal_bL9_C"/>
</dbReference>
<dbReference type="InterPro" id="IPR036791">
    <property type="entry name" value="Ribosomal_bL9_C_sf"/>
</dbReference>
<dbReference type="InterPro" id="IPR020070">
    <property type="entry name" value="Ribosomal_bL9_N"/>
</dbReference>
<dbReference type="InterPro" id="IPR036935">
    <property type="entry name" value="Ribosomal_bL9_N_sf"/>
</dbReference>
<dbReference type="NCBIfam" id="TIGR00158">
    <property type="entry name" value="L9"/>
    <property type="match status" value="1"/>
</dbReference>
<dbReference type="PANTHER" id="PTHR21368">
    <property type="entry name" value="50S RIBOSOMAL PROTEIN L9"/>
    <property type="match status" value="1"/>
</dbReference>
<dbReference type="Pfam" id="PF03948">
    <property type="entry name" value="Ribosomal_L9_C"/>
    <property type="match status" value="1"/>
</dbReference>
<dbReference type="Pfam" id="PF01281">
    <property type="entry name" value="Ribosomal_L9_N"/>
    <property type="match status" value="1"/>
</dbReference>
<dbReference type="SUPFAM" id="SSF55658">
    <property type="entry name" value="L9 N-domain-like"/>
    <property type="match status" value="1"/>
</dbReference>
<dbReference type="SUPFAM" id="SSF55653">
    <property type="entry name" value="Ribosomal protein L9 C-domain"/>
    <property type="match status" value="1"/>
</dbReference>
<dbReference type="PROSITE" id="PS00651">
    <property type="entry name" value="RIBOSOMAL_L9"/>
    <property type="match status" value="1"/>
</dbReference>
<reference key="1">
    <citation type="journal article" date="2005" name="J. Bacteriol.">
        <title>Insights on evolution of virulence and resistance from the complete genome analysis of an early methicillin-resistant Staphylococcus aureus strain and a biofilm-producing methicillin-resistant Staphylococcus epidermidis strain.</title>
        <authorList>
            <person name="Gill S.R."/>
            <person name="Fouts D.E."/>
            <person name="Archer G.L."/>
            <person name="Mongodin E.F."/>
            <person name="DeBoy R.T."/>
            <person name="Ravel J."/>
            <person name="Paulsen I.T."/>
            <person name="Kolonay J.F."/>
            <person name="Brinkac L.M."/>
            <person name="Beanan M.J."/>
            <person name="Dodson R.J."/>
            <person name="Daugherty S.C."/>
            <person name="Madupu R."/>
            <person name="Angiuoli S.V."/>
            <person name="Durkin A.S."/>
            <person name="Haft D.H."/>
            <person name="Vamathevan J.J."/>
            <person name="Khouri H."/>
            <person name="Utterback T.R."/>
            <person name="Lee C."/>
            <person name="Dimitrov G."/>
            <person name="Jiang L."/>
            <person name="Qin H."/>
            <person name="Weidman J."/>
            <person name="Tran K."/>
            <person name="Kang K.H."/>
            <person name="Hance I.R."/>
            <person name="Nelson K.E."/>
            <person name="Fraser C.M."/>
        </authorList>
    </citation>
    <scope>NUCLEOTIDE SEQUENCE [LARGE SCALE GENOMIC DNA]</scope>
    <source>
        <strain>COL</strain>
    </source>
</reference>